<accession>A1ADH3</accession>
<comment type="function">
    <text evidence="1">Catalyzes the last two steps in the biosynthesis of 5-methylaminomethyl-2-thiouridine (mnm(5)s(2)U) at the wobble position (U34) in tRNA. Catalyzes the FAD-dependent demodification of cmnm(5)s(2)U34 to nm(5)s(2)U34, followed by the transfer of a methyl group from S-adenosyl-L-methionine to nm(5)s(2)U34, to form mnm(5)s(2)U34.</text>
</comment>
<comment type="catalytic activity">
    <reaction evidence="1">
        <text>5-aminomethyl-2-thiouridine(34) in tRNA + S-adenosyl-L-methionine = 5-methylaminomethyl-2-thiouridine(34) in tRNA + S-adenosyl-L-homocysteine + H(+)</text>
        <dbReference type="Rhea" id="RHEA:19569"/>
        <dbReference type="Rhea" id="RHEA-COMP:10195"/>
        <dbReference type="Rhea" id="RHEA-COMP:10197"/>
        <dbReference type="ChEBI" id="CHEBI:15378"/>
        <dbReference type="ChEBI" id="CHEBI:57856"/>
        <dbReference type="ChEBI" id="CHEBI:59789"/>
        <dbReference type="ChEBI" id="CHEBI:74454"/>
        <dbReference type="ChEBI" id="CHEBI:74455"/>
        <dbReference type="EC" id="2.1.1.61"/>
    </reaction>
</comment>
<comment type="cofactor">
    <cofactor evidence="1">
        <name>FAD</name>
        <dbReference type="ChEBI" id="CHEBI:57692"/>
    </cofactor>
</comment>
<comment type="subcellular location">
    <subcellularLocation>
        <location evidence="1">Cytoplasm</location>
    </subcellularLocation>
</comment>
<comment type="similarity">
    <text evidence="1">In the N-terminal section; belongs to the methyltransferase superfamily. tRNA (mnm(5)s(2)U34)-methyltransferase family.</text>
</comment>
<comment type="similarity">
    <text evidence="1">In the C-terminal section; belongs to the DAO family.</text>
</comment>
<name>MNMC_ECOK1</name>
<protein>
    <recommendedName>
        <fullName evidence="1">tRNA 5-methylaminomethyl-2-thiouridine biosynthesis bifunctional protein MnmC</fullName>
        <shortName evidence="1">tRNA mnm(5)s(2)U biosynthesis bifunctional protein</shortName>
    </recommendedName>
    <domain>
        <recommendedName>
            <fullName evidence="1">tRNA (mnm(5)s(2)U34)-methyltransferase</fullName>
            <ecNumber evidence="1">2.1.1.61</ecNumber>
        </recommendedName>
    </domain>
    <domain>
        <recommendedName>
            <fullName evidence="1">FAD-dependent cmnm(5)s(2)U34 oxidoreductase</fullName>
            <ecNumber evidence="1">1.5.-.-</ecNumber>
        </recommendedName>
    </domain>
</protein>
<sequence>MKHYSIQPANLEFNAEGTPVSRDFDDVYFSNDNGLEETRYVFLGGNHLEARFPEHPHPLFVVAESGFGTGLNFLTLWQAFDQFREAHPQAQLQRLHFISFEKFPLTRADLALAHQHWPELAPWAEQLQAQWPLPLPGCHRLLLDEGRITLDLWFGDINELTSQLDDSLNQKVDAWFLDGFAPAKNPDMWTQNLFNAMARLARPGSTLATFTSAGFVRRGLQEAGFTMQKRKGFGRKREMLCGVMEQTLPLPCSTPWFNRTGSNKQEAAIIGGGIASALLSLALLRRGWQVTLYCADEAPALGASGNRQGALYPLLSKHDEALNRFFSNAFTFARRFYDLLPVKFDHDWCGVTQLGWDEKSQHKIAQMLSMDLPAELAVAVEANAVEQITGVATNCSGITYPQGGWLCPAELTRNVLKLAQQQGLQIHYQYQLQDLSRKDDGWLLNFAGDQQATHSVVVLANGHQISRFSQTSSLPVYSVAGQVSHIPTTPELAELKQVLCYDGYLTPQNTANQHHCIGASYHRGSEETAYSDEDQQQNRQRLIDCFPHAQWAKEVDVSGKEARCGVRCATRDHLPMVGNVPDYDATLVEYASLAEKKDEAVSAPVYDDLFMFAALGSRGLCSAPLCAEILAAQMSEEPIPMDASTLAALNPNRLWVRKLLKGKAVKAG</sequence>
<feature type="chain" id="PRO_1000064994" description="tRNA 5-methylaminomethyl-2-thiouridine biosynthesis bifunctional protein MnmC">
    <location>
        <begin position="1"/>
        <end position="668"/>
    </location>
</feature>
<feature type="region of interest" description="tRNA (mnm(5)s(2)U34)-methyltransferase">
    <location>
        <begin position="1"/>
        <end position="245"/>
    </location>
</feature>
<feature type="region of interest" description="FAD-dependent cmnm(5)s(2)U34 oxidoreductase">
    <location>
        <begin position="270"/>
        <end position="668"/>
    </location>
</feature>
<gene>
    <name evidence="1" type="primary">mnmC</name>
    <name type="ordered locus">Ecok1_22190</name>
    <name type="ORF">APECO1_4240</name>
</gene>
<proteinExistence type="inferred from homology"/>
<keyword id="KW-0963">Cytoplasm</keyword>
<keyword id="KW-0274">FAD</keyword>
<keyword id="KW-0285">Flavoprotein</keyword>
<keyword id="KW-0489">Methyltransferase</keyword>
<keyword id="KW-0511">Multifunctional enzyme</keyword>
<keyword id="KW-0560">Oxidoreductase</keyword>
<keyword id="KW-1185">Reference proteome</keyword>
<keyword id="KW-0949">S-adenosyl-L-methionine</keyword>
<keyword id="KW-0808">Transferase</keyword>
<keyword id="KW-0819">tRNA processing</keyword>
<evidence type="ECO:0000255" key="1">
    <source>
        <dbReference type="HAMAP-Rule" id="MF_01102"/>
    </source>
</evidence>
<reference key="1">
    <citation type="journal article" date="2007" name="J. Bacteriol.">
        <title>The genome sequence of avian pathogenic Escherichia coli strain O1:K1:H7 shares strong similarities with human extraintestinal pathogenic E. coli genomes.</title>
        <authorList>
            <person name="Johnson T.J."/>
            <person name="Kariyawasam S."/>
            <person name="Wannemuehler Y."/>
            <person name="Mangiamele P."/>
            <person name="Johnson S.J."/>
            <person name="Doetkott C."/>
            <person name="Skyberg J.A."/>
            <person name="Lynne A.M."/>
            <person name="Johnson J.R."/>
            <person name="Nolan L.K."/>
        </authorList>
    </citation>
    <scope>NUCLEOTIDE SEQUENCE [LARGE SCALE GENOMIC DNA]</scope>
</reference>
<organism>
    <name type="scientific">Escherichia coli O1:K1 / APEC</name>
    <dbReference type="NCBI Taxonomy" id="405955"/>
    <lineage>
        <taxon>Bacteria</taxon>
        <taxon>Pseudomonadati</taxon>
        <taxon>Pseudomonadota</taxon>
        <taxon>Gammaproteobacteria</taxon>
        <taxon>Enterobacterales</taxon>
        <taxon>Enterobacteriaceae</taxon>
        <taxon>Escherichia</taxon>
    </lineage>
</organism>
<dbReference type="EC" id="2.1.1.61" evidence="1"/>
<dbReference type="EC" id="1.5.-.-" evidence="1"/>
<dbReference type="EMBL" id="CP000468">
    <property type="protein sequence ID" value="ABJ01713.1"/>
    <property type="molecule type" value="Genomic_DNA"/>
</dbReference>
<dbReference type="RefSeq" id="WP_000683753.1">
    <property type="nucleotide sequence ID" value="NZ_CADILS010000025.1"/>
</dbReference>
<dbReference type="SMR" id="A1ADH3"/>
<dbReference type="KEGG" id="ecv:APECO1_4240"/>
<dbReference type="HOGENOM" id="CLU_022427_1_0_6"/>
<dbReference type="Proteomes" id="UP000008216">
    <property type="component" value="Chromosome"/>
</dbReference>
<dbReference type="GO" id="GO:0005737">
    <property type="term" value="C:cytoplasm"/>
    <property type="evidence" value="ECO:0007669"/>
    <property type="project" value="UniProtKB-SubCell"/>
</dbReference>
<dbReference type="GO" id="GO:0050660">
    <property type="term" value="F:flavin adenine dinucleotide binding"/>
    <property type="evidence" value="ECO:0007669"/>
    <property type="project" value="UniProtKB-UniRule"/>
</dbReference>
<dbReference type="GO" id="GO:0016645">
    <property type="term" value="F:oxidoreductase activity, acting on the CH-NH group of donors"/>
    <property type="evidence" value="ECO:0007669"/>
    <property type="project" value="InterPro"/>
</dbReference>
<dbReference type="GO" id="GO:0004808">
    <property type="term" value="F:tRNA (5-methylaminomethyl-2-thiouridylate)(34)-methyltransferase activity"/>
    <property type="evidence" value="ECO:0007669"/>
    <property type="project" value="UniProtKB-EC"/>
</dbReference>
<dbReference type="GO" id="GO:0032259">
    <property type="term" value="P:methylation"/>
    <property type="evidence" value="ECO:0007669"/>
    <property type="project" value="UniProtKB-KW"/>
</dbReference>
<dbReference type="GO" id="GO:0002098">
    <property type="term" value="P:tRNA wobble uridine modification"/>
    <property type="evidence" value="ECO:0007669"/>
    <property type="project" value="TreeGrafter"/>
</dbReference>
<dbReference type="FunFam" id="3.40.50.150:FF:000107">
    <property type="entry name" value="tRNA 5-methylaminomethyl-2-thiouridine biosynthesis bifunctional protein MnmC"/>
    <property type="match status" value="1"/>
</dbReference>
<dbReference type="Gene3D" id="3.30.9.10">
    <property type="entry name" value="D-Amino Acid Oxidase, subunit A, domain 2"/>
    <property type="match status" value="1"/>
</dbReference>
<dbReference type="Gene3D" id="3.50.50.60">
    <property type="entry name" value="FAD/NAD(P)-binding domain"/>
    <property type="match status" value="1"/>
</dbReference>
<dbReference type="Gene3D" id="3.40.50.150">
    <property type="entry name" value="Vaccinia Virus protein VP39"/>
    <property type="match status" value="1"/>
</dbReference>
<dbReference type="HAMAP" id="MF_01102">
    <property type="entry name" value="MnmC"/>
    <property type="match status" value="1"/>
</dbReference>
<dbReference type="InterPro" id="IPR006076">
    <property type="entry name" value="FAD-dep_OxRdtase"/>
</dbReference>
<dbReference type="InterPro" id="IPR036188">
    <property type="entry name" value="FAD/NAD-bd_sf"/>
</dbReference>
<dbReference type="InterPro" id="IPR008471">
    <property type="entry name" value="MnmC-like_methylTransf"/>
</dbReference>
<dbReference type="InterPro" id="IPR029063">
    <property type="entry name" value="SAM-dependent_MTases_sf"/>
</dbReference>
<dbReference type="InterPro" id="IPR023032">
    <property type="entry name" value="tRNA_MAMT_biosynth_bifunc_MnmC"/>
</dbReference>
<dbReference type="InterPro" id="IPR047785">
    <property type="entry name" value="tRNA_MNMC2"/>
</dbReference>
<dbReference type="InterPro" id="IPR017610">
    <property type="entry name" value="tRNA_S-uridine_synth_MnmC_C"/>
</dbReference>
<dbReference type="NCBIfam" id="TIGR03197">
    <property type="entry name" value="MnmC_Cterm"/>
    <property type="match status" value="1"/>
</dbReference>
<dbReference type="NCBIfam" id="NF002480">
    <property type="entry name" value="PRK01747.1-1"/>
    <property type="match status" value="1"/>
</dbReference>
<dbReference type="NCBIfam" id="NF002481">
    <property type="entry name" value="PRK01747.1-2"/>
    <property type="match status" value="1"/>
</dbReference>
<dbReference type="NCBIfam" id="NF002482">
    <property type="entry name" value="PRK01747.1-3"/>
    <property type="match status" value="1"/>
</dbReference>
<dbReference type="NCBIfam" id="NF002484">
    <property type="entry name" value="PRK01747.1-5"/>
    <property type="match status" value="1"/>
</dbReference>
<dbReference type="NCBIfam" id="NF033855">
    <property type="entry name" value="tRNA_MNMC2"/>
    <property type="match status" value="1"/>
</dbReference>
<dbReference type="PANTHER" id="PTHR13847">
    <property type="entry name" value="SARCOSINE DEHYDROGENASE-RELATED"/>
    <property type="match status" value="1"/>
</dbReference>
<dbReference type="PANTHER" id="PTHR13847:SF283">
    <property type="entry name" value="TRNA 5-METHYLAMINOMETHYL-2-THIOURIDINE BIOSYNTHESIS BIFUNCTIONAL PROTEIN MNMC"/>
    <property type="match status" value="1"/>
</dbReference>
<dbReference type="Pfam" id="PF01266">
    <property type="entry name" value="DAO"/>
    <property type="match status" value="1"/>
</dbReference>
<dbReference type="Pfam" id="PF05430">
    <property type="entry name" value="Methyltransf_30"/>
    <property type="match status" value="1"/>
</dbReference>
<dbReference type="SUPFAM" id="SSF51905">
    <property type="entry name" value="FAD/NAD(P)-binding domain"/>
    <property type="match status" value="1"/>
</dbReference>